<sequence>MANPTSMSSAVHVYRRFVPQPVRSAAATTVPAGVRRKVKGGLARTLSRREARLHRRALRRVRRAGLGQSERRTTAPDGRIAHVHTGLTVDLARRLDHDLVTHALDAAEVPWFAVPALDDRRLCLAVEVRDKGTVRRVLRALLEEHTGYVVSVSPSAADTRETPGSHIKAWKHYGRARVIRLTWLRTDPTEGLWVGEDQGIEIEFWTANTDLPHERLIGPRPNRVQRAVPAEALGIEIGLDRLSGYCDIDGDLGPTVTLENFDVVRLEEISFPVDAVLLWQHPTPWGEELLRAALRSVHQYAPWIDVVHVVAQAEPPAWLEADERISVVRAVPGAEWRLDQLPDLAEHFLLMRPGALLGRPVRPFDYFTPGGGTRPRRGPWNASESFAEWVRAAYSVTGRATGHGYAAGPQPYRADTLTRLGEAGARSLPVPDEQVLSGVPGTHPMDGMAHHFGYVAGHADPSGEASVALHAALPGIGTHLQRLLVRRDVQQLQFFGLGTGEAGSGGGTNAVVRFLHQYYPVPSVFECDRPQTDTEPDRHS</sequence>
<keyword id="KW-0270">Exopolysaccharide synthesis</keyword>
<keyword id="KW-1185">Reference proteome</keyword>
<keyword id="KW-0808">Transferase</keyword>
<accession>O69852</accession>
<name>Y6022_STRCO</name>
<evidence type="ECO:0000305" key="1"/>
<gene>
    <name type="ordered locus">SCO6022</name>
    <name type="ORF">SC1C3.10</name>
</gene>
<comment type="miscellaneous">
    <text>Stealth proteins are part of a protein family that is conserved from bacteria to higher eukaryotes. Family members were first identified in microbes as proteins that help pathogens to elude the host innate immune system. Microbial stealth proteins are involved in the biosynthesis of exopolysaccharides. Stealth proteins are predicted to function as hexose-1-phosphoryltransferases.</text>
</comment>
<comment type="similarity">
    <text evidence="1">Belongs to the stealth family.</text>
</comment>
<organism>
    <name type="scientific">Streptomyces coelicolor (strain ATCC BAA-471 / A3(2) / M145)</name>
    <dbReference type="NCBI Taxonomy" id="100226"/>
    <lineage>
        <taxon>Bacteria</taxon>
        <taxon>Bacillati</taxon>
        <taxon>Actinomycetota</taxon>
        <taxon>Actinomycetes</taxon>
        <taxon>Kitasatosporales</taxon>
        <taxon>Streptomycetaceae</taxon>
        <taxon>Streptomyces</taxon>
        <taxon>Streptomyces albidoflavus group</taxon>
    </lineage>
</organism>
<proteinExistence type="inferred from homology"/>
<dbReference type="EC" id="2.7.-.-"/>
<dbReference type="EMBL" id="AL939126">
    <property type="protein sequence ID" value="CAA19234.1"/>
    <property type="molecule type" value="Genomic_DNA"/>
</dbReference>
<dbReference type="PIR" id="T34702">
    <property type="entry name" value="T34702"/>
</dbReference>
<dbReference type="RefSeq" id="NP_630133.1">
    <property type="nucleotide sequence ID" value="NC_003888.3"/>
</dbReference>
<dbReference type="RefSeq" id="WP_003972901.1">
    <property type="nucleotide sequence ID" value="NZ_VNID01000009.1"/>
</dbReference>
<dbReference type="SMR" id="O69852"/>
<dbReference type="STRING" id="100226.gene:17763681"/>
<dbReference type="PaxDb" id="100226-SCO6022"/>
<dbReference type="KEGG" id="sco:SCO6022"/>
<dbReference type="PATRIC" id="fig|100226.15.peg.6122"/>
<dbReference type="eggNOG" id="COG0438">
    <property type="taxonomic scope" value="Bacteria"/>
</dbReference>
<dbReference type="HOGENOM" id="CLU_033996_0_0_11"/>
<dbReference type="InParanoid" id="O69852"/>
<dbReference type="OrthoDB" id="3918864at2"/>
<dbReference type="PhylomeDB" id="O69852"/>
<dbReference type="Proteomes" id="UP000001973">
    <property type="component" value="Chromosome"/>
</dbReference>
<dbReference type="GO" id="GO:0016772">
    <property type="term" value="F:transferase activity, transferring phosphorus-containing groups"/>
    <property type="evidence" value="ECO:0007669"/>
    <property type="project" value="InterPro"/>
</dbReference>
<dbReference type="GO" id="GO:0000271">
    <property type="term" value="P:polysaccharide biosynthetic process"/>
    <property type="evidence" value="ECO:0007669"/>
    <property type="project" value="UniProtKB-KW"/>
</dbReference>
<dbReference type="InterPro" id="IPR047141">
    <property type="entry name" value="Stealth"/>
</dbReference>
<dbReference type="InterPro" id="IPR021520">
    <property type="entry name" value="Stealth_CR2"/>
</dbReference>
<dbReference type="PANTHER" id="PTHR24045">
    <property type="match status" value="1"/>
</dbReference>
<dbReference type="PANTHER" id="PTHR24045:SF0">
    <property type="entry name" value="N-ACETYLGLUCOSAMINE-1-PHOSPHOTRANSFERASE SUBUNITS ALPHA_BETA"/>
    <property type="match status" value="1"/>
</dbReference>
<dbReference type="Pfam" id="PF11380">
    <property type="entry name" value="Stealth_CR2"/>
    <property type="match status" value="1"/>
</dbReference>
<feature type="chain" id="PRO_0000235962" description="Exopolysaccharide phosphotransferase SCO6022">
    <location>
        <begin position="1"/>
        <end position="540"/>
    </location>
</feature>
<reference key="1">
    <citation type="journal article" date="2002" name="Nature">
        <title>Complete genome sequence of the model actinomycete Streptomyces coelicolor A3(2).</title>
        <authorList>
            <person name="Bentley S.D."/>
            <person name="Chater K.F."/>
            <person name="Cerdeno-Tarraga A.-M."/>
            <person name="Challis G.L."/>
            <person name="Thomson N.R."/>
            <person name="James K.D."/>
            <person name="Harris D.E."/>
            <person name="Quail M.A."/>
            <person name="Kieser H."/>
            <person name="Harper D."/>
            <person name="Bateman A."/>
            <person name="Brown S."/>
            <person name="Chandra G."/>
            <person name="Chen C.W."/>
            <person name="Collins M."/>
            <person name="Cronin A."/>
            <person name="Fraser A."/>
            <person name="Goble A."/>
            <person name="Hidalgo J."/>
            <person name="Hornsby T."/>
            <person name="Howarth S."/>
            <person name="Huang C.-H."/>
            <person name="Kieser T."/>
            <person name="Larke L."/>
            <person name="Murphy L.D."/>
            <person name="Oliver K."/>
            <person name="O'Neil S."/>
            <person name="Rabbinowitsch E."/>
            <person name="Rajandream M.A."/>
            <person name="Rutherford K.M."/>
            <person name="Rutter S."/>
            <person name="Seeger K."/>
            <person name="Saunders D."/>
            <person name="Sharp S."/>
            <person name="Squares R."/>
            <person name="Squares S."/>
            <person name="Taylor K."/>
            <person name="Warren T."/>
            <person name="Wietzorrek A."/>
            <person name="Woodward J.R."/>
            <person name="Barrell B.G."/>
            <person name="Parkhill J."/>
            <person name="Hopwood D.A."/>
        </authorList>
    </citation>
    <scope>NUCLEOTIDE SEQUENCE [LARGE SCALE GENOMIC DNA]</scope>
    <source>
        <strain>ATCC BAA-471 / A3(2) / M145</strain>
    </source>
</reference>
<reference key="2">
    <citation type="journal article" date="2005" name="PLoS Comput. Biol.">
        <title>Stealth proteins: in silico identification of a novel protein family rendering bacterial pathogens invisible to host immune defense.</title>
        <authorList>
            <person name="Sperisen P."/>
            <person name="Schmid C.D."/>
            <person name="Bucher P."/>
            <person name="Zilian O."/>
        </authorList>
    </citation>
    <scope>IDENTIFICATION AS A STEALTH PROTEIN</scope>
    <scope>PREDICTION OF FUNCTION</scope>
</reference>
<protein>
    <recommendedName>
        <fullName>Exopolysaccharide phosphotransferase SCO6022</fullName>
        <ecNumber>2.7.-.-</ecNumber>
    </recommendedName>
    <alternativeName>
        <fullName>Stealth protein SCO6022</fullName>
    </alternativeName>
</protein>